<reference key="1">
    <citation type="journal article" date="2002" name="Proc. Natl. Acad. Sci. U.S.A.">
        <title>The chloroplast and mitochondrial genome sequences of the charophyte Chaetosphaeridium globosum: insights into the timing of the events that restructured organelle DNAs within the green algal lineage that led to land plants.</title>
        <authorList>
            <person name="Turmel M."/>
            <person name="Otis C."/>
            <person name="Lemieux C."/>
        </authorList>
    </citation>
    <scope>NUCLEOTIDE SEQUENCE [LARGE SCALE GENOMIC DNA]</scope>
    <source>
        <strain>M1311</strain>
    </source>
</reference>
<organism>
    <name type="scientific">Chaetosphaeridium globosum</name>
    <name type="common">Charophycean green alga</name>
    <name type="synonym">Herposteiron globosum</name>
    <dbReference type="NCBI Taxonomy" id="96477"/>
    <lineage>
        <taxon>Eukaryota</taxon>
        <taxon>Viridiplantae</taxon>
        <taxon>Streptophyta</taxon>
        <taxon>Coleochaetophyceae</taxon>
        <taxon>Coleochaetales</taxon>
        <taxon>Chaetosphaeridiaceae</taxon>
        <taxon>Chaetosphaeridium</taxon>
    </lineage>
</organism>
<feature type="initiator methionine" description="Removed" evidence="1">
    <location>
        <position position="1"/>
    </location>
</feature>
<feature type="chain" id="PRO_0000339964" description="Photosystem II protein D1" evidence="1">
    <location>
        <begin position="2"/>
        <end position="344"/>
    </location>
</feature>
<feature type="propeptide" id="PRO_0000339965" evidence="1">
    <location>
        <begin position="345"/>
        <end position="353"/>
    </location>
</feature>
<feature type="transmembrane region" description="Helical" evidence="1">
    <location>
        <begin position="29"/>
        <end position="46"/>
    </location>
</feature>
<feature type="transmembrane region" description="Helical" evidence="1">
    <location>
        <begin position="118"/>
        <end position="133"/>
    </location>
</feature>
<feature type="transmembrane region" description="Helical" evidence="1">
    <location>
        <begin position="142"/>
        <end position="156"/>
    </location>
</feature>
<feature type="transmembrane region" description="Helical" evidence="1">
    <location>
        <begin position="197"/>
        <end position="218"/>
    </location>
</feature>
<feature type="transmembrane region" description="Helical" evidence="1">
    <location>
        <begin position="274"/>
        <end position="288"/>
    </location>
</feature>
<feature type="binding site" description="axial binding residue" evidence="1">
    <location>
        <position position="118"/>
    </location>
    <ligand>
        <name>chlorophyll a</name>
        <dbReference type="ChEBI" id="CHEBI:58416"/>
        <label>ChlzD1</label>
    </ligand>
    <ligandPart>
        <name>Mg</name>
        <dbReference type="ChEBI" id="CHEBI:25107"/>
    </ligandPart>
</feature>
<feature type="binding site" evidence="1">
    <location>
        <position position="126"/>
    </location>
    <ligand>
        <name>pheophytin a</name>
        <dbReference type="ChEBI" id="CHEBI:136840"/>
        <label>D1</label>
    </ligand>
</feature>
<feature type="binding site" evidence="1">
    <location>
        <position position="170"/>
    </location>
    <ligand>
        <name>[CaMn4O5] cluster</name>
        <dbReference type="ChEBI" id="CHEBI:189552"/>
    </ligand>
</feature>
<feature type="binding site" evidence="1">
    <location>
        <position position="189"/>
    </location>
    <ligand>
        <name>[CaMn4O5] cluster</name>
        <dbReference type="ChEBI" id="CHEBI:189552"/>
    </ligand>
</feature>
<feature type="binding site" description="axial binding residue" evidence="1">
    <location>
        <position position="198"/>
    </location>
    <ligand>
        <name>chlorophyll a</name>
        <dbReference type="ChEBI" id="CHEBI:58416"/>
        <label>PD1</label>
    </ligand>
    <ligandPart>
        <name>Mg</name>
        <dbReference type="ChEBI" id="CHEBI:25107"/>
    </ligandPart>
</feature>
<feature type="binding site" evidence="1">
    <location>
        <position position="215"/>
    </location>
    <ligand>
        <name>a quinone</name>
        <dbReference type="ChEBI" id="CHEBI:132124"/>
        <label>B</label>
    </ligand>
</feature>
<feature type="binding site" evidence="1">
    <location>
        <position position="215"/>
    </location>
    <ligand>
        <name>Fe cation</name>
        <dbReference type="ChEBI" id="CHEBI:24875"/>
        <note>ligand shared with heterodimeric partner</note>
    </ligand>
</feature>
<feature type="binding site" evidence="1">
    <location>
        <begin position="264"/>
        <end position="265"/>
    </location>
    <ligand>
        <name>a quinone</name>
        <dbReference type="ChEBI" id="CHEBI:132124"/>
        <label>B</label>
    </ligand>
</feature>
<feature type="binding site" evidence="1">
    <location>
        <position position="272"/>
    </location>
    <ligand>
        <name>Fe cation</name>
        <dbReference type="ChEBI" id="CHEBI:24875"/>
        <note>ligand shared with heterodimeric partner</note>
    </ligand>
</feature>
<feature type="binding site" evidence="1">
    <location>
        <position position="332"/>
    </location>
    <ligand>
        <name>[CaMn4O5] cluster</name>
        <dbReference type="ChEBI" id="CHEBI:189552"/>
    </ligand>
</feature>
<feature type="binding site" evidence="1">
    <location>
        <position position="333"/>
    </location>
    <ligand>
        <name>[CaMn4O5] cluster</name>
        <dbReference type="ChEBI" id="CHEBI:189552"/>
    </ligand>
</feature>
<feature type="binding site" evidence="1">
    <location>
        <position position="342"/>
    </location>
    <ligand>
        <name>[CaMn4O5] cluster</name>
        <dbReference type="ChEBI" id="CHEBI:189552"/>
    </ligand>
</feature>
<feature type="binding site" evidence="1">
    <location>
        <position position="344"/>
    </location>
    <ligand>
        <name>[CaMn4O5] cluster</name>
        <dbReference type="ChEBI" id="CHEBI:189552"/>
    </ligand>
</feature>
<feature type="site" description="Tyrosine radical intermediate" evidence="1">
    <location>
        <position position="161"/>
    </location>
</feature>
<feature type="site" description="Stabilizes free radical intermediate" evidence="1">
    <location>
        <position position="190"/>
    </location>
</feature>
<feature type="site" description="Cleavage; by CTPA" evidence="1">
    <location>
        <begin position="344"/>
        <end position="345"/>
    </location>
</feature>
<feature type="modified residue" description="N-acetylthreonine" evidence="1">
    <location>
        <position position="2"/>
    </location>
</feature>
<feature type="modified residue" description="Phosphothreonine" evidence="1">
    <location>
        <position position="2"/>
    </location>
</feature>
<dbReference type="EC" id="1.10.3.9" evidence="1"/>
<dbReference type="EMBL" id="AF494278">
    <property type="protein sequence ID" value="AAM96538.1"/>
    <property type="molecule type" value="Genomic_DNA"/>
</dbReference>
<dbReference type="RefSeq" id="NP_683826.1">
    <property type="nucleotide sequence ID" value="NC_004115.1"/>
</dbReference>
<dbReference type="SMR" id="Q8M9W3"/>
<dbReference type="GeneID" id="860694"/>
<dbReference type="GO" id="GO:0009535">
    <property type="term" value="C:chloroplast thylakoid membrane"/>
    <property type="evidence" value="ECO:0007669"/>
    <property type="project" value="UniProtKB-SubCell"/>
</dbReference>
<dbReference type="GO" id="GO:0009523">
    <property type="term" value="C:photosystem II"/>
    <property type="evidence" value="ECO:0007669"/>
    <property type="project" value="UniProtKB-KW"/>
</dbReference>
<dbReference type="GO" id="GO:0016168">
    <property type="term" value="F:chlorophyll binding"/>
    <property type="evidence" value="ECO:0007669"/>
    <property type="project" value="UniProtKB-UniRule"/>
</dbReference>
<dbReference type="GO" id="GO:0045156">
    <property type="term" value="F:electron transporter, transferring electrons within the cyclic electron transport pathway of photosynthesis activity"/>
    <property type="evidence" value="ECO:0007669"/>
    <property type="project" value="InterPro"/>
</dbReference>
<dbReference type="GO" id="GO:0005506">
    <property type="term" value="F:iron ion binding"/>
    <property type="evidence" value="ECO:0007669"/>
    <property type="project" value="UniProtKB-UniRule"/>
</dbReference>
<dbReference type="GO" id="GO:0016682">
    <property type="term" value="F:oxidoreductase activity, acting on diphenols and related substances as donors, oxygen as acceptor"/>
    <property type="evidence" value="ECO:0007669"/>
    <property type="project" value="UniProtKB-UniRule"/>
</dbReference>
<dbReference type="GO" id="GO:0010242">
    <property type="term" value="F:oxygen evolving activity"/>
    <property type="evidence" value="ECO:0007669"/>
    <property type="project" value="UniProtKB-EC"/>
</dbReference>
<dbReference type="GO" id="GO:0009772">
    <property type="term" value="P:photosynthetic electron transport in photosystem II"/>
    <property type="evidence" value="ECO:0007669"/>
    <property type="project" value="InterPro"/>
</dbReference>
<dbReference type="GO" id="GO:0009635">
    <property type="term" value="P:response to herbicide"/>
    <property type="evidence" value="ECO:0007669"/>
    <property type="project" value="UniProtKB-KW"/>
</dbReference>
<dbReference type="CDD" id="cd09289">
    <property type="entry name" value="Photosystem-II_D1"/>
    <property type="match status" value="1"/>
</dbReference>
<dbReference type="FunFam" id="1.20.85.10:FF:000002">
    <property type="entry name" value="Photosystem II protein D1"/>
    <property type="match status" value="1"/>
</dbReference>
<dbReference type="Gene3D" id="1.20.85.10">
    <property type="entry name" value="Photosystem II protein D1-like"/>
    <property type="match status" value="1"/>
</dbReference>
<dbReference type="HAMAP" id="MF_01379">
    <property type="entry name" value="PSII_PsbA_D1"/>
    <property type="match status" value="1"/>
</dbReference>
<dbReference type="InterPro" id="IPR055266">
    <property type="entry name" value="D1/D2"/>
</dbReference>
<dbReference type="InterPro" id="IPR036854">
    <property type="entry name" value="Photo_II_D1/D2_sf"/>
</dbReference>
<dbReference type="InterPro" id="IPR000484">
    <property type="entry name" value="Photo_RC_L/M"/>
</dbReference>
<dbReference type="InterPro" id="IPR055265">
    <property type="entry name" value="Photo_RC_L/M_CS"/>
</dbReference>
<dbReference type="InterPro" id="IPR005867">
    <property type="entry name" value="PSII_D1"/>
</dbReference>
<dbReference type="NCBIfam" id="TIGR01151">
    <property type="entry name" value="psbA"/>
    <property type="match status" value="1"/>
</dbReference>
<dbReference type="PANTHER" id="PTHR33149:SF12">
    <property type="entry name" value="PHOTOSYSTEM II D2 PROTEIN"/>
    <property type="match status" value="1"/>
</dbReference>
<dbReference type="PANTHER" id="PTHR33149">
    <property type="entry name" value="PHOTOSYSTEM II PROTEIN D1"/>
    <property type="match status" value="1"/>
</dbReference>
<dbReference type="Pfam" id="PF00124">
    <property type="entry name" value="Photo_RC"/>
    <property type="match status" value="1"/>
</dbReference>
<dbReference type="PRINTS" id="PR00256">
    <property type="entry name" value="REACTNCENTRE"/>
</dbReference>
<dbReference type="SUPFAM" id="SSF81483">
    <property type="entry name" value="Bacterial photosystem II reaction centre, L and M subunits"/>
    <property type="match status" value="1"/>
</dbReference>
<dbReference type="PROSITE" id="PS00244">
    <property type="entry name" value="REACTION_CENTER"/>
    <property type="match status" value="1"/>
</dbReference>
<protein>
    <recommendedName>
        <fullName evidence="1">Photosystem II protein D1</fullName>
        <shortName evidence="1">PSII D1 protein</shortName>
        <ecNumber evidence="1">1.10.3.9</ecNumber>
    </recommendedName>
    <alternativeName>
        <fullName evidence="1">Photosystem II Q(B) protein</fullName>
    </alternativeName>
</protein>
<comment type="function">
    <text evidence="1">Photosystem II (PSII) is a light-driven water:plastoquinone oxidoreductase that uses light energy to abstract electrons from H(2)O, generating O(2) and a proton gradient subsequently used for ATP formation. It consists of a core antenna complex that captures photons, and an electron transfer chain that converts photonic excitation into a charge separation. The D1/D2 (PsbA/PsbD) reaction center heterodimer binds P680, the primary electron donor of PSII as well as several subsequent electron acceptors.</text>
</comment>
<comment type="catalytic activity">
    <reaction evidence="1">
        <text>2 a plastoquinone + 4 hnu + 2 H2O = 2 a plastoquinol + O2</text>
        <dbReference type="Rhea" id="RHEA:36359"/>
        <dbReference type="Rhea" id="RHEA-COMP:9561"/>
        <dbReference type="Rhea" id="RHEA-COMP:9562"/>
        <dbReference type="ChEBI" id="CHEBI:15377"/>
        <dbReference type="ChEBI" id="CHEBI:15379"/>
        <dbReference type="ChEBI" id="CHEBI:17757"/>
        <dbReference type="ChEBI" id="CHEBI:30212"/>
        <dbReference type="ChEBI" id="CHEBI:62192"/>
        <dbReference type="EC" id="1.10.3.9"/>
    </reaction>
</comment>
<comment type="cofactor">
    <text evidence="1">The D1/D2 heterodimer binds P680, chlorophylls that are the primary electron donor of PSII, and subsequent electron acceptors. It shares a non-heme iron and each subunit binds pheophytin, quinone, additional chlorophylls, carotenoids and lipids. D1 provides most of the ligands for the Mn4-Ca-O5 cluster of the oxygen-evolving complex (OEC). There is also a Cl(-1) ion associated with D1 and D2, which is required for oxygen evolution. The PSII complex binds additional chlorophylls, carotenoids and specific lipids.</text>
</comment>
<comment type="subunit">
    <text evidence="1">PSII is composed of 1 copy each of membrane proteins PsbA, PsbB, PsbC, PsbD, PsbE, PsbF, PsbH, PsbI, PsbJ, PsbK, PsbL, PsbM, PsbT, PsbX, PsbY, PsbZ, Psb30/Ycf12, at least 3 peripheral proteins of the oxygen-evolving complex and a large number of cofactors. It forms dimeric complexes.</text>
</comment>
<comment type="subcellular location">
    <subcellularLocation>
        <location evidence="1">Plastid</location>
        <location evidence="1">Chloroplast thylakoid membrane</location>
        <topology evidence="1">Multi-pass membrane protein</topology>
    </subcellularLocation>
</comment>
<comment type="PTM">
    <text evidence="1">Tyr-161 forms a radical intermediate that is referred to as redox-active TyrZ, YZ or Y-Z.</text>
</comment>
<comment type="PTM">
    <text evidence="1">C-terminally processed by CTPA; processing is essential to allow assembly of the oxygen-evolving complex and thus photosynthetic growth.</text>
</comment>
<comment type="miscellaneous">
    <text evidence="1">2 of the reaction center chlorophylls (ChlD1 and ChlD2) are entirely coordinated by water.</text>
</comment>
<comment type="miscellaneous">
    <text evidence="1">Herbicides such as atrazine, BNT, diuron or ioxynil bind in the Q(B) binding site and block subsequent electron transfer.</text>
</comment>
<comment type="similarity">
    <text evidence="1">Belongs to the reaction center PufL/M/PsbA/D family.</text>
</comment>
<geneLocation type="chloroplast"/>
<keyword id="KW-0007">Acetylation</keyword>
<keyword id="KW-0106">Calcium</keyword>
<keyword id="KW-0148">Chlorophyll</keyword>
<keyword id="KW-0150">Chloroplast</keyword>
<keyword id="KW-0157">Chromophore</keyword>
<keyword id="KW-0249">Electron transport</keyword>
<keyword id="KW-0359">Herbicide resistance</keyword>
<keyword id="KW-0408">Iron</keyword>
<keyword id="KW-0460">Magnesium</keyword>
<keyword id="KW-0464">Manganese</keyword>
<keyword id="KW-0472">Membrane</keyword>
<keyword id="KW-0479">Metal-binding</keyword>
<keyword id="KW-0560">Oxidoreductase</keyword>
<keyword id="KW-0597">Phosphoprotein</keyword>
<keyword id="KW-0602">Photosynthesis</keyword>
<keyword id="KW-0604">Photosystem II</keyword>
<keyword id="KW-0934">Plastid</keyword>
<keyword id="KW-0793">Thylakoid</keyword>
<keyword id="KW-0812">Transmembrane</keyword>
<keyword id="KW-1133">Transmembrane helix</keyword>
<keyword id="KW-0813">Transport</keyword>
<accession>Q8M9W3</accession>
<evidence type="ECO:0000255" key="1">
    <source>
        <dbReference type="HAMAP-Rule" id="MF_01379"/>
    </source>
</evidence>
<gene>
    <name evidence="1" type="primary">psbA</name>
</gene>
<proteinExistence type="inferred from homology"/>
<sequence length="353" mass="38849">MTATLERRESASLWGRFCDWVTSTENRLYIGWFGVVMIPTLLTATSVFIIAFIAAPPVDIDGIREPVSGSLLYGNNIISGAIVPTSAAIGLHFYPIWEAASVDEWLYNGGPYELIVLHFFLGICCYMGREWELSYRLGMRPWIAVAYSAPVAAATAVFLIYPIGQGSFSDGMPLGISGTFNFMIVFQAEHNILMHPFHMLGVAGVFGGSLFSAMHGSLVTSSLIRETTENESANAGYKFGQEEETYNIVAAHGYFGRLIFQYASFNNSRSLHFFLAAWPVVGIWFTALGISTMAFNLNGFNFNQSVVDSQGRVINTWADIINRANLGMEVMHERNAHNFPLDLASVEAPSVNG</sequence>
<name>PSBA_CHAGL</name>